<keyword id="KW-0256">Endoplasmic reticulum</keyword>
<keyword id="KW-0325">Glycoprotein</keyword>
<keyword id="KW-0472">Membrane</keyword>
<keyword id="KW-1185">Reference proteome</keyword>
<keyword id="KW-0732">Signal</keyword>
<keyword id="KW-0812">Transmembrane</keyword>
<keyword id="KW-1133">Transmembrane helix</keyword>
<evidence type="ECO:0000250" key="1"/>
<evidence type="ECO:0000255" key="2"/>
<evidence type="ECO:0000305" key="3"/>
<comment type="function">
    <text evidence="1">Required for normal levels of the cell wall 1,6-beta-glucan. Involved in a protein folding machinery chaperoning proteins acting in various physiological processes including cell wall synthesis and lysis of autophagic bodies (By similarity).</text>
</comment>
<comment type="subcellular location">
    <subcellularLocation>
        <location evidence="1">Endoplasmic reticulum membrane</location>
        <topology evidence="1">Single-pass type I membrane protein</topology>
    </subcellularLocation>
</comment>
<comment type="similarity">
    <text evidence="3">Belongs to the ROT1 family.</text>
</comment>
<name>ROT1_YARLI</name>
<accession>Q6CFU5</accession>
<gene>
    <name type="primary">ROT1</name>
    <name type="ordered locus">YALI0B03652g</name>
</gene>
<organism>
    <name type="scientific">Yarrowia lipolytica (strain CLIB 122 / E 150)</name>
    <name type="common">Yeast</name>
    <name type="synonym">Candida lipolytica</name>
    <dbReference type="NCBI Taxonomy" id="284591"/>
    <lineage>
        <taxon>Eukaryota</taxon>
        <taxon>Fungi</taxon>
        <taxon>Dikarya</taxon>
        <taxon>Ascomycota</taxon>
        <taxon>Saccharomycotina</taxon>
        <taxon>Dipodascomycetes</taxon>
        <taxon>Dipodascales</taxon>
        <taxon>Dipodascales incertae sedis</taxon>
        <taxon>Yarrowia</taxon>
    </lineage>
</organism>
<protein>
    <recommendedName>
        <fullName>Protein ROT1</fullName>
    </recommendedName>
</protein>
<feature type="signal peptide" evidence="2">
    <location>
        <begin position="1"/>
        <end position="23"/>
    </location>
</feature>
<feature type="chain" id="PRO_0000333419" description="Protein ROT1">
    <location>
        <begin position="24"/>
        <end position="248"/>
    </location>
</feature>
<feature type="topological domain" description="Lumenal" evidence="2">
    <location>
        <begin position="24"/>
        <end position="229"/>
    </location>
</feature>
<feature type="transmembrane region" description="Helical" evidence="2">
    <location>
        <begin position="230"/>
        <end position="247"/>
    </location>
</feature>
<feature type="topological domain" description="Cytoplasmic" evidence="2">
    <location>
        <position position="248"/>
    </location>
</feature>
<feature type="glycosylation site" description="N-linked (GlcNAc...) asparagine" evidence="2">
    <location>
        <position position="103"/>
    </location>
</feature>
<feature type="glycosylation site" description="N-linked (GlcNAc...) asparagine" evidence="2">
    <location>
        <position position="107"/>
    </location>
</feature>
<feature type="glycosylation site" description="N-linked (GlcNAc...) asparagine" evidence="2">
    <location>
        <position position="139"/>
    </location>
</feature>
<dbReference type="EMBL" id="CR382128">
    <property type="protein sequence ID" value="CAG82693.1"/>
    <property type="molecule type" value="Genomic_DNA"/>
</dbReference>
<dbReference type="RefSeq" id="XP_500467.1">
    <property type="nucleotide sequence ID" value="XM_500467.1"/>
</dbReference>
<dbReference type="FunCoup" id="Q6CFU5">
    <property type="interactions" value="24"/>
</dbReference>
<dbReference type="STRING" id="284591.Q6CFU5"/>
<dbReference type="GlyCosmos" id="Q6CFU5">
    <property type="glycosylation" value="3 sites, No reported glycans"/>
</dbReference>
<dbReference type="EnsemblFungi" id="CAG82693">
    <property type="protein sequence ID" value="CAG82693"/>
    <property type="gene ID" value="YALI0_B03652g"/>
</dbReference>
<dbReference type="KEGG" id="yli:2907041"/>
<dbReference type="VEuPathDB" id="FungiDB:YALI0_B03652g"/>
<dbReference type="HOGENOM" id="CLU_071622_0_0_1"/>
<dbReference type="InParanoid" id="Q6CFU5"/>
<dbReference type="OMA" id="YKPPQML"/>
<dbReference type="OrthoDB" id="544at4891"/>
<dbReference type="Proteomes" id="UP000001300">
    <property type="component" value="Chromosome B"/>
</dbReference>
<dbReference type="GO" id="GO:0005789">
    <property type="term" value="C:endoplasmic reticulum membrane"/>
    <property type="evidence" value="ECO:0000318"/>
    <property type="project" value="GO_Central"/>
</dbReference>
<dbReference type="GO" id="GO:0051082">
    <property type="term" value="F:unfolded protein binding"/>
    <property type="evidence" value="ECO:0000318"/>
    <property type="project" value="GO_Central"/>
</dbReference>
<dbReference type="GO" id="GO:0006458">
    <property type="term" value="P:'de novo' protein folding"/>
    <property type="evidence" value="ECO:0000318"/>
    <property type="project" value="GO_Central"/>
</dbReference>
<dbReference type="GO" id="GO:0007118">
    <property type="term" value="P:budding cell apical bud growth"/>
    <property type="evidence" value="ECO:0000318"/>
    <property type="project" value="GO_Central"/>
</dbReference>
<dbReference type="InterPro" id="IPR019623">
    <property type="entry name" value="Rot1"/>
</dbReference>
<dbReference type="PANTHER" id="PTHR28090">
    <property type="entry name" value="PROTEIN ROT1"/>
    <property type="match status" value="1"/>
</dbReference>
<dbReference type="PANTHER" id="PTHR28090:SF1">
    <property type="entry name" value="PROTEIN ROT1"/>
    <property type="match status" value="1"/>
</dbReference>
<dbReference type="Pfam" id="PF10681">
    <property type="entry name" value="Rot1"/>
    <property type="match status" value="1"/>
</dbReference>
<dbReference type="PIRSF" id="PIRSF017290">
    <property type="entry name" value="ROT1_prd"/>
    <property type="match status" value="1"/>
</dbReference>
<sequence length="248" mass="27690">MKLSTISAFVTSALLATVGHTQSDSSSVDDLEGTWSSKSGAVITGPDFYDPIDELLLEPTLPGISYSFTKDGFFEEAIYQVSANPKDPKCPTGVLIFQHGTYNISDNGTLTLEPYMVDGRQLLSDPCKQEENAVYSRYNQTEKFKRFSVYVDPYHGRYRLDLFQFNGAPMPPMYLAYRPAMMLPTVTLNPTQEASQPENTGSTRAKIRRSIDNRKVTGIKKHSVVDYNSLWWFGVSMIAAGGAGWYFL</sequence>
<proteinExistence type="inferred from homology"/>
<reference key="1">
    <citation type="journal article" date="2004" name="Nature">
        <title>Genome evolution in yeasts.</title>
        <authorList>
            <person name="Dujon B."/>
            <person name="Sherman D."/>
            <person name="Fischer G."/>
            <person name="Durrens P."/>
            <person name="Casaregola S."/>
            <person name="Lafontaine I."/>
            <person name="de Montigny J."/>
            <person name="Marck C."/>
            <person name="Neuveglise C."/>
            <person name="Talla E."/>
            <person name="Goffard N."/>
            <person name="Frangeul L."/>
            <person name="Aigle M."/>
            <person name="Anthouard V."/>
            <person name="Babour A."/>
            <person name="Barbe V."/>
            <person name="Barnay S."/>
            <person name="Blanchin S."/>
            <person name="Beckerich J.-M."/>
            <person name="Beyne E."/>
            <person name="Bleykasten C."/>
            <person name="Boisrame A."/>
            <person name="Boyer J."/>
            <person name="Cattolico L."/>
            <person name="Confanioleri F."/>
            <person name="de Daruvar A."/>
            <person name="Despons L."/>
            <person name="Fabre E."/>
            <person name="Fairhead C."/>
            <person name="Ferry-Dumazet H."/>
            <person name="Groppi A."/>
            <person name="Hantraye F."/>
            <person name="Hennequin C."/>
            <person name="Jauniaux N."/>
            <person name="Joyet P."/>
            <person name="Kachouri R."/>
            <person name="Kerrest A."/>
            <person name="Koszul R."/>
            <person name="Lemaire M."/>
            <person name="Lesur I."/>
            <person name="Ma L."/>
            <person name="Muller H."/>
            <person name="Nicaud J.-M."/>
            <person name="Nikolski M."/>
            <person name="Oztas S."/>
            <person name="Ozier-Kalogeropoulos O."/>
            <person name="Pellenz S."/>
            <person name="Potier S."/>
            <person name="Richard G.-F."/>
            <person name="Straub M.-L."/>
            <person name="Suleau A."/>
            <person name="Swennen D."/>
            <person name="Tekaia F."/>
            <person name="Wesolowski-Louvel M."/>
            <person name="Westhof E."/>
            <person name="Wirth B."/>
            <person name="Zeniou-Meyer M."/>
            <person name="Zivanovic Y."/>
            <person name="Bolotin-Fukuhara M."/>
            <person name="Thierry A."/>
            <person name="Bouchier C."/>
            <person name="Caudron B."/>
            <person name="Scarpelli C."/>
            <person name="Gaillardin C."/>
            <person name="Weissenbach J."/>
            <person name="Wincker P."/>
            <person name="Souciet J.-L."/>
        </authorList>
    </citation>
    <scope>NUCLEOTIDE SEQUENCE [LARGE SCALE GENOMIC DNA]</scope>
    <source>
        <strain>CLIB 122 / E 150</strain>
    </source>
</reference>